<keyword id="KW-0143">Chaperone</keyword>
<keyword id="KW-0963">Cytoplasm</keyword>
<keyword id="KW-0235">DNA replication</keyword>
<keyword id="KW-0479">Metal-binding</keyword>
<keyword id="KW-0677">Repeat</keyword>
<keyword id="KW-0346">Stress response</keyword>
<keyword id="KW-0862">Zinc</keyword>
<keyword id="KW-0863">Zinc-finger</keyword>
<accession>P0CW07</accession>
<accession>P35515</accession>
<feature type="chain" id="PRO_0000408036" description="Chaperone protein DnaJ">
    <location>
        <begin position="1"/>
        <end position="389"/>
    </location>
</feature>
<feature type="domain" description="J" evidence="1">
    <location>
        <begin position="6"/>
        <end position="70"/>
    </location>
</feature>
<feature type="repeat" description="CXXCXGXG motif">
    <location>
        <begin position="144"/>
        <end position="151"/>
    </location>
</feature>
<feature type="repeat" description="CXXCXGXG motif">
    <location>
        <begin position="161"/>
        <end position="168"/>
    </location>
</feature>
<feature type="repeat" description="CXXCXGXG motif">
    <location>
        <begin position="187"/>
        <end position="194"/>
    </location>
</feature>
<feature type="repeat" description="CXXCXGXG motif">
    <location>
        <begin position="201"/>
        <end position="208"/>
    </location>
</feature>
<feature type="zinc finger region" description="CR-type" evidence="1">
    <location>
        <begin position="131"/>
        <end position="213"/>
    </location>
</feature>
<feature type="region of interest" description="Disordered" evidence="2">
    <location>
        <begin position="145"/>
        <end position="167"/>
    </location>
</feature>
<feature type="region of interest" description="Disordered" evidence="2">
    <location>
        <begin position="351"/>
        <end position="389"/>
    </location>
</feature>
<feature type="compositionally biased region" description="Basic and acidic residues" evidence="2">
    <location>
        <begin position="355"/>
        <end position="389"/>
    </location>
</feature>
<feature type="binding site" evidence="1">
    <location>
        <position position="144"/>
    </location>
    <ligand>
        <name>Zn(2+)</name>
        <dbReference type="ChEBI" id="CHEBI:29105"/>
        <label>1</label>
    </ligand>
</feature>
<feature type="binding site" evidence="1">
    <location>
        <position position="147"/>
    </location>
    <ligand>
        <name>Zn(2+)</name>
        <dbReference type="ChEBI" id="CHEBI:29105"/>
        <label>1</label>
    </ligand>
</feature>
<feature type="binding site" evidence="1">
    <location>
        <position position="161"/>
    </location>
    <ligand>
        <name>Zn(2+)</name>
        <dbReference type="ChEBI" id="CHEBI:29105"/>
        <label>2</label>
    </ligand>
</feature>
<feature type="binding site" evidence="1">
    <location>
        <position position="164"/>
    </location>
    <ligand>
        <name>Zn(2+)</name>
        <dbReference type="ChEBI" id="CHEBI:29105"/>
        <label>2</label>
    </ligand>
</feature>
<feature type="binding site" evidence="1">
    <location>
        <position position="187"/>
    </location>
    <ligand>
        <name>Zn(2+)</name>
        <dbReference type="ChEBI" id="CHEBI:29105"/>
        <label>2</label>
    </ligand>
</feature>
<feature type="binding site" evidence="1">
    <location>
        <position position="190"/>
    </location>
    <ligand>
        <name>Zn(2+)</name>
        <dbReference type="ChEBI" id="CHEBI:29105"/>
        <label>2</label>
    </ligand>
</feature>
<feature type="binding site" evidence="1">
    <location>
        <position position="201"/>
    </location>
    <ligand>
        <name>Zn(2+)</name>
        <dbReference type="ChEBI" id="CHEBI:29105"/>
        <label>1</label>
    </ligand>
</feature>
<feature type="binding site" evidence="1">
    <location>
        <position position="204"/>
    </location>
    <ligand>
        <name>Zn(2+)</name>
        <dbReference type="ChEBI" id="CHEBI:29105"/>
        <label>1</label>
    </ligand>
</feature>
<comment type="function">
    <text evidence="1">Participates actively in the response to hyperosmotic and heat shock by preventing the aggregation of stress-denatured proteins and by disaggregating proteins, also in an autonomous, DnaK-independent fashion. Unfolded proteins bind initially to DnaJ; upon interaction with the DnaJ-bound protein, DnaK hydrolyzes its bound ATP, resulting in the formation of a stable complex. GrpE releases ADP from DnaK; ATP binding to DnaK triggers the release of the substrate protein, thus completing the reaction cycle. Several rounds of ATP-dependent interactions between DnaJ, DnaK and GrpE are required for fully efficient folding. Also involved, together with DnaK and GrpE, in the DNA replication of plasmids through activation of initiation proteins.</text>
</comment>
<comment type="cofactor">
    <cofactor evidence="1">
        <name>Zn(2+)</name>
        <dbReference type="ChEBI" id="CHEBI:29105"/>
    </cofactor>
    <text evidence="1">Binds 2 Zn(2+) ions per monomer.</text>
</comment>
<comment type="subunit">
    <text evidence="1">Homodimer.</text>
</comment>
<comment type="subcellular location">
    <subcellularLocation>
        <location evidence="1">Cytoplasm</location>
    </subcellularLocation>
</comment>
<comment type="domain">
    <text evidence="1">The J domain is necessary and sufficient to stimulate DnaK ATPase activity. Zinc center 1 plays an important role in the autonomous, DnaK-independent chaperone activity of DnaJ. Zinc center 2 is essential for interaction with DnaK and for DnaJ activity.</text>
</comment>
<comment type="similarity">
    <text evidence="1">Belongs to the DnaJ family.</text>
</comment>
<organism>
    <name type="scientific">Methanosarcina mazei (strain ATCC BAA-159 / DSM 3647 / Goe1 / Go1 / JCM 11833 / OCM 88)</name>
    <name type="common">Methanosarcina frisia</name>
    <dbReference type="NCBI Taxonomy" id="192952"/>
    <lineage>
        <taxon>Archaea</taxon>
        <taxon>Methanobacteriati</taxon>
        <taxon>Methanobacteriota</taxon>
        <taxon>Stenosarchaea group</taxon>
        <taxon>Methanomicrobia</taxon>
        <taxon>Methanosarcinales</taxon>
        <taxon>Methanosarcinaceae</taxon>
        <taxon>Methanosarcina</taxon>
    </lineage>
</organism>
<name>DNAJ_METMA</name>
<gene>
    <name evidence="1" type="primary">dnaJ</name>
    <name type="ordered locus">MM_2504</name>
</gene>
<dbReference type="EMBL" id="AE008384">
    <property type="protein sequence ID" value="AAM32200.1"/>
    <property type="molecule type" value="Genomic_DNA"/>
</dbReference>
<dbReference type="RefSeq" id="WP_011034422.1">
    <property type="nucleotide sequence ID" value="NC_003901.1"/>
</dbReference>
<dbReference type="SMR" id="P0CW07"/>
<dbReference type="DNASU" id="1480846"/>
<dbReference type="GeneID" id="82161581"/>
<dbReference type="KEGG" id="mma:MM_2504"/>
<dbReference type="PATRIC" id="fig|192952.21.peg.2867"/>
<dbReference type="eggNOG" id="arCOG02846">
    <property type="taxonomic scope" value="Archaea"/>
</dbReference>
<dbReference type="HOGENOM" id="CLU_017633_0_7_2"/>
<dbReference type="Proteomes" id="UP000000595">
    <property type="component" value="Chromosome"/>
</dbReference>
<dbReference type="GO" id="GO:0005737">
    <property type="term" value="C:cytoplasm"/>
    <property type="evidence" value="ECO:0007669"/>
    <property type="project" value="UniProtKB-SubCell"/>
</dbReference>
<dbReference type="GO" id="GO:0005524">
    <property type="term" value="F:ATP binding"/>
    <property type="evidence" value="ECO:0007669"/>
    <property type="project" value="InterPro"/>
</dbReference>
<dbReference type="GO" id="GO:0031072">
    <property type="term" value="F:heat shock protein binding"/>
    <property type="evidence" value="ECO:0007669"/>
    <property type="project" value="InterPro"/>
</dbReference>
<dbReference type="GO" id="GO:0051082">
    <property type="term" value="F:unfolded protein binding"/>
    <property type="evidence" value="ECO:0007669"/>
    <property type="project" value="UniProtKB-UniRule"/>
</dbReference>
<dbReference type="GO" id="GO:0008270">
    <property type="term" value="F:zinc ion binding"/>
    <property type="evidence" value="ECO:0007669"/>
    <property type="project" value="UniProtKB-UniRule"/>
</dbReference>
<dbReference type="GO" id="GO:0051085">
    <property type="term" value="P:chaperone cofactor-dependent protein refolding"/>
    <property type="evidence" value="ECO:0007669"/>
    <property type="project" value="TreeGrafter"/>
</dbReference>
<dbReference type="GO" id="GO:0006260">
    <property type="term" value="P:DNA replication"/>
    <property type="evidence" value="ECO:0007669"/>
    <property type="project" value="UniProtKB-KW"/>
</dbReference>
<dbReference type="GO" id="GO:0042026">
    <property type="term" value="P:protein refolding"/>
    <property type="evidence" value="ECO:0007669"/>
    <property type="project" value="TreeGrafter"/>
</dbReference>
<dbReference type="GO" id="GO:0009408">
    <property type="term" value="P:response to heat"/>
    <property type="evidence" value="ECO:0007669"/>
    <property type="project" value="InterPro"/>
</dbReference>
<dbReference type="CDD" id="cd06257">
    <property type="entry name" value="DnaJ"/>
    <property type="match status" value="1"/>
</dbReference>
<dbReference type="CDD" id="cd10747">
    <property type="entry name" value="DnaJ_C"/>
    <property type="match status" value="1"/>
</dbReference>
<dbReference type="CDD" id="cd10719">
    <property type="entry name" value="DnaJ_zf"/>
    <property type="match status" value="1"/>
</dbReference>
<dbReference type="FunFam" id="2.60.260.20:FF:000005">
    <property type="entry name" value="Chaperone protein dnaJ 1, mitochondrial"/>
    <property type="match status" value="1"/>
</dbReference>
<dbReference type="FunFam" id="1.10.287.110:FF:000031">
    <property type="entry name" value="Molecular chaperone DnaJ"/>
    <property type="match status" value="1"/>
</dbReference>
<dbReference type="FunFam" id="2.10.230.10:FF:000002">
    <property type="entry name" value="Molecular chaperone DnaJ"/>
    <property type="match status" value="1"/>
</dbReference>
<dbReference type="Gene3D" id="1.10.287.110">
    <property type="entry name" value="DnaJ domain"/>
    <property type="match status" value="1"/>
</dbReference>
<dbReference type="Gene3D" id="2.10.230.10">
    <property type="entry name" value="Heat shock protein DnaJ, cysteine-rich domain"/>
    <property type="match status" value="1"/>
</dbReference>
<dbReference type="Gene3D" id="2.60.260.20">
    <property type="entry name" value="Urease metallochaperone UreE, N-terminal domain"/>
    <property type="match status" value="2"/>
</dbReference>
<dbReference type="HAMAP" id="MF_01152">
    <property type="entry name" value="DnaJ"/>
    <property type="match status" value="1"/>
</dbReference>
<dbReference type="InterPro" id="IPR012724">
    <property type="entry name" value="DnaJ"/>
</dbReference>
<dbReference type="InterPro" id="IPR002939">
    <property type="entry name" value="DnaJ_C"/>
</dbReference>
<dbReference type="InterPro" id="IPR001623">
    <property type="entry name" value="DnaJ_domain"/>
</dbReference>
<dbReference type="InterPro" id="IPR018253">
    <property type="entry name" value="DnaJ_domain_CS"/>
</dbReference>
<dbReference type="InterPro" id="IPR008971">
    <property type="entry name" value="HSP40/DnaJ_pept-bd"/>
</dbReference>
<dbReference type="InterPro" id="IPR001305">
    <property type="entry name" value="HSP_DnaJ_Cys-rich_dom"/>
</dbReference>
<dbReference type="InterPro" id="IPR036410">
    <property type="entry name" value="HSP_DnaJ_Cys-rich_dom_sf"/>
</dbReference>
<dbReference type="InterPro" id="IPR036869">
    <property type="entry name" value="J_dom_sf"/>
</dbReference>
<dbReference type="NCBIfam" id="TIGR02349">
    <property type="entry name" value="DnaJ_bact"/>
    <property type="match status" value="1"/>
</dbReference>
<dbReference type="NCBIfam" id="NF008035">
    <property type="entry name" value="PRK10767.1"/>
    <property type="match status" value="1"/>
</dbReference>
<dbReference type="NCBIfam" id="NF010891">
    <property type="entry name" value="PRK14298.1"/>
    <property type="match status" value="1"/>
</dbReference>
<dbReference type="PANTHER" id="PTHR43096">
    <property type="entry name" value="DNAJ HOMOLOG 1, MITOCHONDRIAL-RELATED"/>
    <property type="match status" value="1"/>
</dbReference>
<dbReference type="PANTHER" id="PTHR43096:SF52">
    <property type="entry name" value="DNAJ HOMOLOG 1, MITOCHONDRIAL-RELATED"/>
    <property type="match status" value="1"/>
</dbReference>
<dbReference type="Pfam" id="PF00226">
    <property type="entry name" value="DnaJ"/>
    <property type="match status" value="1"/>
</dbReference>
<dbReference type="Pfam" id="PF01556">
    <property type="entry name" value="DnaJ_C"/>
    <property type="match status" value="1"/>
</dbReference>
<dbReference type="Pfam" id="PF00684">
    <property type="entry name" value="DnaJ_CXXCXGXG"/>
    <property type="match status" value="1"/>
</dbReference>
<dbReference type="PRINTS" id="PR00625">
    <property type="entry name" value="JDOMAIN"/>
</dbReference>
<dbReference type="SMART" id="SM00271">
    <property type="entry name" value="DnaJ"/>
    <property type="match status" value="1"/>
</dbReference>
<dbReference type="SUPFAM" id="SSF46565">
    <property type="entry name" value="Chaperone J-domain"/>
    <property type="match status" value="1"/>
</dbReference>
<dbReference type="SUPFAM" id="SSF57938">
    <property type="entry name" value="DnaJ/Hsp40 cysteine-rich domain"/>
    <property type="match status" value="1"/>
</dbReference>
<dbReference type="SUPFAM" id="SSF49493">
    <property type="entry name" value="HSP40/DnaJ peptide-binding domain"/>
    <property type="match status" value="2"/>
</dbReference>
<dbReference type="PROSITE" id="PS00636">
    <property type="entry name" value="DNAJ_1"/>
    <property type="match status" value="1"/>
</dbReference>
<dbReference type="PROSITE" id="PS50076">
    <property type="entry name" value="DNAJ_2"/>
    <property type="match status" value="1"/>
</dbReference>
<dbReference type="PROSITE" id="PS51188">
    <property type="entry name" value="ZF_CR"/>
    <property type="match status" value="1"/>
</dbReference>
<reference key="1">
    <citation type="journal article" date="2002" name="J. Mol. Microbiol. Biotechnol.">
        <title>The genome of Methanosarcina mazei: evidence for lateral gene transfer between Bacteria and Archaea.</title>
        <authorList>
            <person name="Deppenmeier U."/>
            <person name="Johann A."/>
            <person name="Hartsch T."/>
            <person name="Merkl R."/>
            <person name="Schmitz R.A."/>
            <person name="Martinez-Arias R."/>
            <person name="Henne A."/>
            <person name="Wiezer A."/>
            <person name="Baeumer S."/>
            <person name="Jacobi C."/>
            <person name="Brueggemann H."/>
            <person name="Lienard T."/>
            <person name="Christmann A."/>
            <person name="Boemecke M."/>
            <person name="Steckel S."/>
            <person name="Bhattacharyya A."/>
            <person name="Lykidis A."/>
            <person name="Overbeek R."/>
            <person name="Klenk H.-P."/>
            <person name="Gunsalus R.P."/>
            <person name="Fritz H.-J."/>
            <person name="Gottschalk G."/>
        </authorList>
    </citation>
    <scope>NUCLEOTIDE SEQUENCE [LARGE SCALE GENOMIC DNA]</scope>
    <source>
        <strain>ATCC BAA-159 / DSM 3647 / Goe1 / Go1 / JCM 11833 / OCM 88</strain>
    </source>
</reference>
<evidence type="ECO:0000255" key="1">
    <source>
        <dbReference type="HAMAP-Rule" id="MF_01152"/>
    </source>
</evidence>
<evidence type="ECO:0000256" key="2">
    <source>
        <dbReference type="SAM" id="MobiDB-lite"/>
    </source>
</evidence>
<proteinExistence type="inferred from homology"/>
<protein>
    <recommendedName>
        <fullName evidence="1">Chaperone protein DnaJ</fullName>
    </recommendedName>
</protein>
<sequence length="389" mass="42990">MATKRDYYEILGLSKDSSVEDIKKTYRKLALQYHPDRNKEPGAEEKFKEISEAYAVLSDAEKRAQYDRFGHAGIDNQYSAEDIFRGADFGGFGDIFEMFFGGGRRGGPMGPRRGSDLQYDLYVTFEEAAFGVRKDIDIPRTERCSTCSGTGAKPGTSPKRCPNCGGTGQVRTTRSTLGMQFVSTTTCSACHGRGQVVESPCPTCSGAGRVRSRRKMSVNVPAGADSGMTLRLSGEGDAGEPGAPSGDLYIIVHVMEHKYFKRVDYDVISELPISFTQAALGADIMVDTLYGKVKMNIPSGTQTHSVFRLKDKGIQRLQGHGKGDQLVRVIIRTPTKLTQEQKDLLHQFEYLSNGKKPEAEERSRSDKQKSEKPRKSKGLFEKVKDAFES</sequence>